<evidence type="ECO:0000255" key="1">
    <source>
        <dbReference type="HAMAP-Rule" id="MF_01220"/>
    </source>
</evidence>
<feature type="chain" id="PRO_1000054001" description="Uridylate kinase">
    <location>
        <begin position="1"/>
        <end position="242"/>
    </location>
</feature>
<feature type="region of interest" description="Involved in allosteric activation by GTP" evidence="1">
    <location>
        <begin position="24"/>
        <end position="29"/>
    </location>
</feature>
<feature type="binding site" evidence="1">
    <location>
        <begin position="16"/>
        <end position="19"/>
    </location>
    <ligand>
        <name>ATP</name>
        <dbReference type="ChEBI" id="CHEBI:30616"/>
    </ligand>
</feature>
<feature type="binding site" evidence="1">
    <location>
        <position position="58"/>
    </location>
    <ligand>
        <name>UMP</name>
        <dbReference type="ChEBI" id="CHEBI:57865"/>
    </ligand>
</feature>
<feature type="binding site" evidence="1">
    <location>
        <position position="59"/>
    </location>
    <ligand>
        <name>ATP</name>
        <dbReference type="ChEBI" id="CHEBI:30616"/>
    </ligand>
</feature>
<feature type="binding site" evidence="1">
    <location>
        <position position="63"/>
    </location>
    <ligand>
        <name>ATP</name>
        <dbReference type="ChEBI" id="CHEBI:30616"/>
    </ligand>
</feature>
<feature type="binding site" evidence="1">
    <location>
        <position position="78"/>
    </location>
    <ligand>
        <name>UMP</name>
        <dbReference type="ChEBI" id="CHEBI:57865"/>
    </ligand>
</feature>
<feature type="binding site" evidence="1">
    <location>
        <begin position="139"/>
        <end position="146"/>
    </location>
    <ligand>
        <name>UMP</name>
        <dbReference type="ChEBI" id="CHEBI:57865"/>
    </ligand>
</feature>
<feature type="binding site" evidence="1">
    <location>
        <position position="166"/>
    </location>
    <ligand>
        <name>ATP</name>
        <dbReference type="ChEBI" id="CHEBI:30616"/>
    </ligand>
</feature>
<feature type="binding site" evidence="1">
    <location>
        <position position="172"/>
    </location>
    <ligand>
        <name>ATP</name>
        <dbReference type="ChEBI" id="CHEBI:30616"/>
    </ligand>
</feature>
<feature type="binding site" evidence="1">
    <location>
        <position position="175"/>
    </location>
    <ligand>
        <name>ATP</name>
        <dbReference type="ChEBI" id="CHEBI:30616"/>
    </ligand>
</feature>
<reference key="1">
    <citation type="journal article" date="2007" name="J. Bacteriol.">
        <title>The complete genome sequence of Roseobacter denitrificans reveals a mixotrophic rather than photosynthetic metabolism.</title>
        <authorList>
            <person name="Swingley W.D."/>
            <person name="Sadekar S."/>
            <person name="Mastrian S.D."/>
            <person name="Matthies H.J."/>
            <person name="Hao J."/>
            <person name="Ramos H."/>
            <person name="Acharya C.R."/>
            <person name="Conrad A.L."/>
            <person name="Taylor H.L."/>
            <person name="Dejesa L.C."/>
            <person name="Shah M.K."/>
            <person name="O'Huallachain M.E."/>
            <person name="Lince M.T."/>
            <person name="Blankenship R.E."/>
            <person name="Beatty J.T."/>
            <person name="Touchman J.W."/>
        </authorList>
    </citation>
    <scope>NUCLEOTIDE SEQUENCE [LARGE SCALE GENOMIC DNA]</scope>
    <source>
        <strain>ATCC 33942 / OCh 114</strain>
    </source>
</reference>
<comment type="function">
    <text evidence="1">Catalyzes the reversible phosphorylation of UMP to UDP.</text>
</comment>
<comment type="catalytic activity">
    <reaction evidence="1">
        <text>UMP + ATP = UDP + ADP</text>
        <dbReference type="Rhea" id="RHEA:24400"/>
        <dbReference type="ChEBI" id="CHEBI:30616"/>
        <dbReference type="ChEBI" id="CHEBI:57865"/>
        <dbReference type="ChEBI" id="CHEBI:58223"/>
        <dbReference type="ChEBI" id="CHEBI:456216"/>
        <dbReference type="EC" id="2.7.4.22"/>
    </reaction>
</comment>
<comment type="activity regulation">
    <text evidence="1">Allosterically activated by GTP. Inhibited by UTP.</text>
</comment>
<comment type="pathway">
    <text evidence="1">Pyrimidine metabolism; CTP biosynthesis via de novo pathway; UDP from UMP (UMPK route): step 1/1.</text>
</comment>
<comment type="subunit">
    <text evidence="1">Homohexamer.</text>
</comment>
<comment type="subcellular location">
    <subcellularLocation>
        <location evidence="1">Cytoplasm</location>
    </subcellularLocation>
</comment>
<comment type="similarity">
    <text evidence="1">Belongs to the UMP kinase family.</text>
</comment>
<name>PYRH_ROSDO</name>
<accession>Q166F6</accession>
<dbReference type="EC" id="2.7.4.22" evidence="1"/>
<dbReference type="EMBL" id="CP000362">
    <property type="protein sequence ID" value="ABG32137.1"/>
    <property type="molecule type" value="Genomic_DNA"/>
</dbReference>
<dbReference type="RefSeq" id="WP_011568754.1">
    <property type="nucleotide sequence ID" value="NC_008209.1"/>
</dbReference>
<dbReference type="SMR" id="Q166F6"/>
<dbReference type="STRING" id="375451.RD1_2585"/>
<dbReference type="KEGG" id="rde:RD1_2585"/>
<dbReference type="eggNOG" id="COG0528">
    <property type="taxonomic scope" value="Bacteria"/>
</dbReference>
<dbReference type="HOGENOM" id="CLU_033861_0_0_5"/>
<dbReference type="OrthoDB" id="9807458at2"/>
<dbReference type="UniPathway" id="UPA00159">
    <property type="reaction ID" value="UER00275"/>
</dbReference>
<dbReference type="Proteomes" id="UP000007029">
    <property type="component" value="Chromosome"/>
</dbReference>
<dbReference type="GO" id="GO:0005737">
    <property type="term" value="C:cytoplasm"/>
    <property type="evidence" value="ECO:0007669"/>
    <property type="project" value="UniProtKB-SubCell"/>
</dbReference>
<dbReference type="GO" id="GO:0005524">
    <property type="term" value="F:ATP binding"/>
    <property type="evidence" value="ECO:0007669"/>
    <property type="project" value="UniProtKB-KW"/>
</dbReference>
<dbReference type="GO" id="GO:0033862">
    <property type="term" value="F:UMP kinase activity"/>
    <property type="evidence" value="ECO:0007669"/>
    <property type="project" value="UniProtKB-EC"/>
</dbReference>
<dbReference type="GO" id="GO:0044210">
    <property type="term" value="P:'de novo' CTP biosynthetic process"/>
    <property type="evidence" value="ECO:0007669"/>
    <property type="project" value="UniProtKB-UniRule"/>
</dbReference>
<dbReference type="GO" id="GO:0006225">
    <property type="term" value="P:UDP biosynthetic process"/>
    <property type="evidence" value="ECO:0007669"/>
    <property type="project" value="TreeGrafter"/>
</dbReference>
<dbReference type="CDD" id="cd04254">
    <property type="entry name" value="AAK_UMPK-PyrH-Ec"/>
    <property type="match status" value="1"/>
</dbReference>
<dbReference type="FunFam" id="3.40.1160.10:FF:000001">
    <property type="entry name" value="Uridylate kinase"/>
    <property type="match status" value="1"/>
</dbReference>
<dbReference type="Gene3D" id="3.40.1160.10">
    <property type="entry name" value="Acetylglutamate kinase-like"/>
    <property type="match status" value="1"/>
</dbReference>
<dbReference type="HAMAP" id="MF_01220_B">
    <property type="entry name" value="PyrH_B"/>
    <property type="match status" value="1"/>
</dbReference>
<dbReference type="InterPro" id="IPR036393">
    <property type="entry name" value="AceGlu_kinase-like_sf"/>
</dbReference>
<dbReference type="InterPro" id="IPR001048">
    <property type="entry name" value="Asp/Glu/Uridylate_kinase"/>
</dbReference>
<dbReference type="InterPro" id="IPR011817">
    <property type="entry name" value="Uridylate_kinase"/>
</dbReference>
<dbReference type="InterPro" id="IPR015963">
    <property type="entry name" value="Uridylate_kinase_bac"/>
</dbReference>
<dbReference type="NCBIfam" id="TIGR02075">
    <property type="entry name" value="pyrH_bact"/>
    <property type="match status" value="1"/>
</dbReference>
<dbReference type="PANTHER" id="PTHR42833">
    <property type="entry name" value="URIDYLATE KINASE"/>
    <property type="match status" value="1"/>
</dbReference>
<dbReference type="PANTHER" id="PTHR42833:SF4">
    <property type="entry name" value="URIDYLATE KINASE PUMPKIN, CHLOROPLASTIC"/>
    <property type="match status" value="1"/>
</dbReference>
<dbReference type="Pfam" id="PF00696">
    <property type="entry name" value="AA_kinase"/>
    <property type="match status" value="1"/>
</dbReference>
<dbReference type="PIRSF" id="PIRSF005650">
    <property type="entry name" value="Uridylate_kin"/>
    <property type="match status" value="1"/>
</dbReference>
<dbReference type="SUPFAM" id="SSF53633">
    <property type="entry name" value="Carbamate kinase-like"/>
    <property type="match status" value="1"/>
</dbReference>
<protein>
    <recommendedName>
        <fullName evidence="1">Uridylate kinase</fullName>
        <shortName evidence="1">UK</shortName>
        <ecNumber evidence="1">2.7.4.22</ecNumber>
    </recommendedName>
    <alternativeName>
        <fullName evidence="1">Uridine monophosphate kinase</fullName>
        <shortName evidence="1">UMP kinase</shortName>
        <shortName evidence="1">UMPK</shortName>
    </alternativeName>
</protein>
<proteinExistence type="inferred from homology"/>
<keyword id="KW-0021">Allosteric enzyme</keyword>
<keyword id="KW-0067">ATP-binding</keyword>
<keyword id="KW-0963">Cytoplasm</keyword>
<keyword id="KW-0418">Kinase</keyword>
<keyword id="KW-0547">Nucleotide-binding</keyword>
<keyword id="KW-0665">Pyrimidine biosynthesis</keyword>
<keyword id="KW-1185">Reference proteome</keyword>
<keyword id="KW-0808">Transferase</keyword>
<gene>
    <name evidence="1" type="primary">pyrH</name>
    <name type="ordered locus">RD1_2585</name>
</gene>
<sequence length="242" mass="26181">MTTPEPQAAFKRVMLKISGEALMGDQGFGLHPPTVERVAREVQSVHALGVEICMVIGGGNIFRGLQGSAQGMERTTADYMGMLATVMNALAMQSALEGLGIHTRVISAITMNEVAEPYIRRRAVRHLEKKRVCIFAAGTGNPYFTTDTAATLRANEMSCEAIFKGTKVDGVYDKDPAKFADAKRYDTVTYDDVLAKRLGVMDASAIALARDNNLPIIVFSLDEPGGFRGILAGEGTYTRVQD</sequence>
<organism>
    <name type="scientific">Roseobacter denitrificans (strain ATCC 33942 / OCh 114)</name>
    <name type="common">Erythrobacter sp. (strain OCh 114)</name>
    <name type="synonym">Roseobacter denitrificans</name>
    <dbReference type="NCBI Taxonomy" id="375451"/>
    <lineage>
        <taxon>Bacteria</taxon>
        <taxon>Pseudomonadati</taxon>
        <taxon>Pseudomonadota</taxon>
        <taxon>Alphaproteobacteria</taxon>
        <taxon>Rhodobacterales</taxon>
        <taxon>Roseobacteraceae</taxon>
        <taxon>Roseobacter</taxon>
    </lineage>
</organism>